<feature type="chain" id="PRO_0000244925" description="NADH-quinone oxidoreductase subunit H">
    <location>
        <begin position="1"/>
        <end position="356"/>
    </location>
</feature>
<feature type="transmembrane region" description="Helical" evidence="1">
    <location>
        <begin position="18"/>
        <end position="38"/>
    </location>
</feature>
<feature type="transmembrane region" description="Helical" evidence="1">
    <location>
        <begin position="87"/>
        <end position="107"/>
    </location>
</feature>
<feature type="transmembrane region" description="Helical" evidence="1">
    <location>
        <begin position="120"/>
        <end position="140"/>
    </location>
</feature>
<feature type="transmembrane region" description="Helical" evidence="1">
    <location>
        <begin position="166"/>
        <end position="186"/>
    </location>
</feature>
<feature type="transmembrane region" description="Helical" evidence="1">
    <location>
        <begin position="202"/>
        <end position="222"/>
    </location>
</feature>
<feature type="transmembrane region" description="Helical" evidence="1">
    <location>
        <begin position="257"/>
        <end position="277"/>
    </location>
</feature>
<feature type="transmembrane region" description="Helical" evidence="1">
    <location>
        <begin position="292"/>
        <end position="312"/>
    </location>
</feature>
<feature type="transmembrane region" description="Helical" evidence="1">
    <location>
        <begin position="333"/>
        <end position="353"/>
    </location>
</feature>
<sequence length="356" mass="39315">MADFFAMPLWTDFLWPLIVMVAQSVLLLVVLLIAIAYILLADRKIWAAVQIRRGPNVVGPWGLFQSFADLLKFVLKEPIIPSGANKGVFLLAPLVSCVLALAAWAVIPVNLNWVIADINVGILYIFAISSLSIYGIIMGGWASNSKYPFLAALRSAAQMVSYEVSIGFVIITVLLCAGSLNLSAIVEAQHTSGLATLIGLPWLTFLNWYWLPLLPMFVVFYVSALAETNRPPFDLVEAESELVAGFMVEYGSTPYLLFMLGEYVAITTMCAMGAILFMGGWLPPVDLPPFNWVPGVIWFSLKLFFMFFLIAMAKAIVPRYRYDQLMRLGWKVFLPLSLAMVVIVAAVLQFAGIAPK</sequence>
<organism>
    <name type="scientific">Nitrobacter winogradskyi (strain ATCC 25391 / DSM 10237 / CIP 104748 / NCIMB 11846 / Nb-255)</name>
    <dbReference type="NCBI Taxonomy" id="323098"/>
    <lineage>
        <taxon>Bacteria</taxon>
        <taxon>Pseudomonadati</taxon>
        <taxon>Pseudomonadota</taxon>
        <taxon>Alphaproteobacteria</taxon>
        <taxon>Hyphomicrobiales</taxon>
        <taxon>Nitrobacteraceae</taxon>
        <taxon>Nitrobacter</taxon>
    </lineage>
</organism>
<evidence type="ECO:0000255" key="1">
    <source>
        <dbReference type="HAMAP-Rule" id="MF_01350"/>
    </source>
</evidence>
<name>NUOH_NITWN</name>
<gene>
    <name evidence="1" type="primary">nuoH</name>
    <name type="ordered locus">Nwi_1880</name>
</gene>
<dbReference type="EC" id="7.1.1.-" evidence="1"/>
<dbReference type="EMBL" id="CP000115">
    <property type="protein sequence ID" value="ABA05140.1"/>
    <property type="molecule type" value="Genomic_DNA"/>
</dbReference>
<dbReference type="RefSeq" id="WP_011315136.1">
    <property type="nucleotide sequence ID" value="NC_007406.1"/>
</dbReference>
<dbReference type="SMR" id="Q3SRF1"/>
<dbReference type="STRING" id="323098.Nwi_1880"/>
<dbReference type="KEGG" id="nwi:Nwi_1880"/>
<dbReference type="eggNOG" id="COG1005">
    <property type="taxonomic scope" value="Bacteria"/>
</dbReference>
<dbReference type="HOGENOM" id="CLU_015134_0_1_5"/>
<dbReference type="OrthoDB" id="9803734at2"/>
<dbReference type="Proteomes" id="UP000002531">
    <property type="component" value="Chromosome"/>
</dbReference>
<dbReference type="GO" id="GO:0005886">
    <property type="term" value="C:plasma membrane"/>
    <property type="evidence" value="ECO:0007669"/>
    <property type="project" value="UniProtKB-SubCell"/>
</dbReference>
<dbReference type="GO" id="GO:0003954">
    <property type="term" value="F:NADH dehydrogenase activity"/>
    <property type="evidence" value="ECO:0007669"/>
    <property type="project" value="TreeGrafter"/>
</dbReference>
<dbReference type="GO" id="GO:0016655">
    <property type="term" value="F:oxidoreductase activity, acting on NAD(P)H, quinone or similar compound as acceptor"/>
    <property type="evidence" value="ECO:0007669"/>
    <property type="project" value="UniProtKB-UniRule"/>
</dbReference>
<dbReference type="GO" id="GO:0048038">
    <property type="term" value="F:quinone binding"/>
    <property type="evidence" value="ECO:0007669"/>
    <property type="project" value="UniProtKB-KW"/>
</dbReference>
<dbReference type="GO" id="GO:0009060">
    <property type="term" value="P:aerobic respiration"/>
    <property type="evidence" value="ECO:0007669"/>
    <property type="project" value="TreeGrafter"/>
</dbReference>
<dbReference type="HAMAP" id="MF_01350">
    <property type="entry name" value="NDH1_NuoH"/>
    <property type="match status" value="1"/>
</dbReference>
<dbReference type="InterPro" id="IPR001694">
    <property type="entry name" value="NADH_UbQ_OxRdtase_su1/FPO"/>
</dbReference>
<dbReference type="InterPro" id="IPR018086">
    <property type="entry name" value="NADH_UbQ_OxRdtase_su1_CS"/>
</dbReference>
<dbReference type="NCBIfam" id="NF004745">
    <property type="entry name" value="PRK06076.1-6"/>
    <property type="match status" value="1"/>
</dbReference>
<dbReference type="PANTHER" id="PTHR11432">
    <property type="entry name" value="NADH DEHYDROGENASE SUBUNIT 1"/>
    <property type="match status" value="1"/>
</dbReference>
<dbReference type="PANTHER" id="PTHR11432:SF3">
    <property type="entry name" value="NADH-UBIQUINONE OXIDOREDUCTASE CHAIN 1"/>
    <property type="match status" value="1"/>
</dbReference>
<dbReference type="Pfam" id="PF00146">
    <property type="entry name" value="NADHdh"/>
    <property type="match status" value="1"/>
</dbReference>
<dbReference type="PROSITE" id="PS00668">
    <property type="entry name" value="COMPLEX1_ND1_2"/>
    <property type="match status" value="1"/>
</dbReference>
<comment type="function">
    <text evidence="1">NDH-1 shuttles electrons from NADH, via FMN and iron-sulfur (Fe-S) centers, to quinones in the respiratory chain. The immediate electron acceptor for the enzyme in this species is believed to be ubiquinone. Couples the redox reaction to proton translocation (for every two electrons transferred, four hydrogen ions are translocated across the cytoplasmic membrane), and thus conserves the redox energy in a proton gradient. This subunit may bind ubiquinone.</text>
</comment>
<comment type="catalytic activity">
    <reaction evidence="1">
        <text>a quinone + NADH + 5 H(+)(in) = a quinol + NAD(+) + 4 H(+)(out)</text>
        <dbReference type="Rhea" id="RHEA:57888"/>
        <dbReference type="ChEBI" id="CHEBI:15378"/>
        <dbReference type="ChEBI" id="CHEBI:24646"/>
        <dbReference type="ChEBI" id="CHEBI:57540"/>
        <dbReference type="ChEBI" id="CHEBI:57945"/>
        <dbReference type="ChEBI" id="CHEBI:132124"/>
    </reaction>
</comment>
<comment type="subunit">
    <text evidence="1">NDH-1 is composed of 14 different subunits. Subunits NuoA, H, J, K, L, M, N constitute the membrane sector of the complex.</text>
</comment>
<comment type="subcellular location">
    <subcellularLocation>
        <location evidence="1">Cell inner membrane</location>
        <topology evidence="1">Multi-pass membrane protein</topology>
    </subcellularLocation>
</comment>
<comment type="similarity">
    <text evidence="1">Belongs to the complex I subunit 1 family.</text>
</comment>
<accession>Q3SRF1</accession>
<proteinExistence type="inferred from homology"/>
<protein>
    <recommendedName>
        <fullName evidence="1">NADH-quinone oxidoreductase subunit H</fullName>
        <ecNumber evidence="1">7.1.1.-</ecNumber>
    </recommendedName>
    <alternativeName>
        <fullName evidence="1">NADH dehydrogenase I subunit H</fullName>
    </alternativeName>
    <alternativeName>
        <fullName evidence="1">NDH-1 subunit H</fullName>
    </alternativeName>
</protein>
<reference key="1">
    <citation type="journal article" date="2006" name="Appl. Environ. Microbiol.">
        <title>Genome sequence of the chemolithoautotrophic nitrite-oxidizing bacterium Nitrobacter winogradskyi Nb-255.</title>
        <authorList>
            <person name="Starkenburg S.R."/>
            <person name="Chain P.S.G."/>
            <person name="Sayavedra-Soto L.A."/>
            <person name="Hauser L."/>
            <person name="Land M.L."/>
            <person name="Larimer F.W."/>
            <person name="Malfatti S.A."/>
            <person name="Klotz M.G."/>
            <person name="Bottomley P.J."/>
            <person name="Arp D.J."/>
            <person name="Hickey W.J."/>
        </authorList>
    </citation>
    <scope>NUCLEOTIDE SEQUENCE [LARGE SCALE GENOMIC DNA]</scope>
    <source>
        <strain>ATCC 25391 / DSM 10237 / CIP 104748 / NCIMB 11846 / Nb-255</strain>
    </source>
</reference>
<keyword id="KW-0997">Cell inner membrane</keyword>
<keyword id="KW-1003">Cell membrane</keyword>
<keyword id="KW-0472">Membrane</keyword>
<keyword id="KW-0520">NAD</keyword>
<keyword id="KW-0874">Quinone</keyword>
<keyword id="KW-1185">Reference proteome</keyword>
<keyword id="KW-1278">Translocase</keyword>
<keyword id="KW-0812">Transmembrane</keyword>
<keyword id="KW-1133">Transmembrane helix</keyword>
<keyword id="KW-0830">Ubiquinone</keyword>